<protein>
    <recommendedName>
        <fullName evidence="4">Myosuppressin</fullName>
        <shortName evidence="4">MS</shortName>
    </recommendedName>
</protein>
<organism>
    <name type="scientific">Namaquaphasma ookiepense</name>
    <name type="common">Gladiator bug</name>
    <dbReference type="NCBI Taxonomy" id="409167"/>
    <lineage>
        <taxon>Eukaryota</taxon>
        <taxon>Metazoa</taxon>
        <taxon>Ecdysozoa</taxon>
        <taxon>Arthropoda</taxon>
        <taxon>Hexapoda</taxon>
        <taxon>Insecta</taxon>
        <taxon>Pterygota</taxon>
        <taxon>Neoptera</taxon>
        <taxon>Polyneoptera</taxon>
        <taxon>Mantophasmatodea</taxon>
        <taxon>Austrophasmatidae</taxon>
        <taxon>Namaquaphasma</taxon>
    </lineage>
</organism>
<dbReference type="GO" id="GO:0005576">
    <property type="term" value="C:extracellular region"/>
    <property type="evidence" value="ECO:0007669"/>
    <property type="project" value="UniProtKB-SubCell"/>
</dbReference>
<dbReference type="GO" id="GO:0007218">
    <property type="term" value="P:neuropeptide signaling pathway"/>
    <property type="evidence" value="ECO:0007669"/>
    <property type="project" value="UniProtKB-KW"/>
</dbReference>
<reference evidence="5" key="1">
    <citation type="journal article" date="2012" name="Syst. Biol.">
        <title>Peptidomics-based phylogeny and biogeography of Mantophasmatodea (Hexapoda).</title>
        <authorList>
            <person name="Predel R."/>
            <person name="Neupert S."/>
            <person name="Huetteroth W."/>
            <person name="Kahnt J."/>
            <person name="Waidelich D."/>
            <person name="Roth S."/>
        </authorList>
    </citation>
    <scope>PROTEIN SEQUENCE</scope>
    <scope>PYROGLUTAMATE FORMATION AT GLN-1</scope>
    <scope>AMIDATION AT PHE-10</scope>
    <source>
        <tissue evidence="3">Corpora cardiaca</tissue>
    </source>
</reference>
<keyword id="KW-0027">Amidation</keyword>
<keyword id="KW-0903">Direct protein sequencing</keyword>
<keyword id="KW-0527">Neuropeptide</keyword>
<keyword id="KW-0873">Pyrrolidone carboxylic acid</keyword>
<keyword id="KW-0964">Secreted</keyword>
<sequence length="10" mass="1275">QDVDHVFLRF</sequence>
<feature type="peptide" id="PRO_0000420513" description="Myosuppressin" evidence="3">
    <location>
        <begin position="1"/>
        <end position="10"/>
    </location>
</feature>
<feature type="modified residue" description="Pyrrolidone carboxylic acid" evidence="3">
    <location>
        <position position="1"/>
    </location>
</feature>
<feature type="modified residue" description="Phenylalanine amide" evidence="3">
    <location>
        <position position="10"/>
    </location>
</feature>
<comment type="function">
    <text evidence="1">Myoinhibiting neuropeptide.</text>
</comment>
<comment type="subcellular location">
    <subcellularLocation>
        <location evidence="6">Secreted</location>
    </subcellularLocation>
</comment>
<comment type="similarity">
    <text evidence="2">Belongs to the myosuppressin family.</text>
</comment>
<name>NEMS_NAMOO</name>
<proteinExistence type="evidence at protein level"/>
<accession>B0M2U6</accession>
<evidence type="ECO:0000250" key="1">
    <source>
        <dbReference type="UniProtKB" id="P61849"/>
    </source>
</evidence>
<evidence type="ECO:0000255" key="2"/>
<evidence type="ECO:0000269" key="3">
    <source>
    </source>
</evidence>
<evidence type="ECO:0000303" key="4">
    <source>
    </source>
</evidence>
<evidence type="ECO:0000305" key="5"/>
<evidence type="ECO:0000305" key="6">
    <source>
    </source>
</evidence>